<reference key="1">
    <citation type="journal article" date="1995" name="Science">
        <title>Whole-genome random sequencing and assembly of Haemophilus influenzae Rd.</title>
        <authorList>
            <person name="Fleischmann R.D."/>
            <person name="Adams M.D."/>
            <person name="White O."/>
            <person name="Clayton R.A."/>
            <person name="Kirkness E.F."/>
            <person name="Kerlavage A.R."/>
            <person name="Bult C.J."/>
            <person name="Tomb J.-F."/>
            <person name="Dougherty B.A."/>
            <person name="Merrick J.M."/>
            <person name="McKenney K."/>
            <person name="Sutton G.G."/>
            <person name="FitzHugh W."/>
            <person name="Fields C.A."/>
            <person name="Gocayne J.D."/>
            <person name="Scott J.D."/>
            <person name="Shirley R."/>
            <person name="Liu L.-I."/>
            <person name="Glodek A."/>
            <person name="Kelley J.M."/>
            <person name="Weidman J.F."/>
            <person name="Phillips C.A."/>
            <person name="Spriggs T."/>
            <person name="Hedblom E."/>
            <person name="Cotton M.D."/>
            <person name="Utterback T.R."/>
            <person name="Hanna M.C."/>
            <person name="Nguyen D.T."/>
            <person name="Saudek D.M."/>
            <person name="Brandon R.C."/>
            <person name="Fine L.D."/>
            <person name="Fritchman J.L."/>
            <person name="Fuhrmann J.L."/>
            <person name="Geoghagen N.S.M."/>
            <person name="Gnehm C.L."/>
            <person name="McDonald L.A."/>
            <person name="Small K.V."/>
            <person name="Fraser C.M."/>
            <person name="Smith H.O."/>
            <person name="Venter J.C."/>
        </authorList>
    </citation>
    <scope>NUCLEOTIDE SEQUENCE [LARGE SCALE GENOMIC DNA]</scope>
    <source>
        <strain>ATCC 51907 / DSM 11121 / KW20 / Rd</strain>
    </source>
</reference>
<reference key="2">
    <citation type="journal article" date="2003" name="Nucleic Acids Res.">
        <title>A nomenclature for restriction enzymes, DNA methyltransferases, homing endonucleases and their genes.</title>
        <authorList>
            <person name="Roberts R.J."/>
            <person name="Belfort M."/>
            <person name="Bestor T."/>
            <person name="Bhagwat A.S."/>
            <person name="Bickle T.A."/>
            <person name="Bitinaite J."/>
            <person name="Blumenthal R.M."/>
            <person name="Degtyarev S.K."/>
            <person name="Dryden D.T."/>
            <person name="Dybvig K."/>
            <person name="Firman K."/>
            <person name="Gromova E.S."/>
            <person name="Gumport R.I."/>
            <person name="Halford S.E."/>
            <person name="Hattman S."/>
            <person name="Heitman J."/>
            <person name="Hornby D.P."/>
            <person name="Janulaitis A."/>
            <person name="Jeltsch A."/>
            <person name="Josephsen J."/>
            <person name="Kiss A."/>
            <person name="Klaenhammer T.R."/>
            <person name="Kobayashi I."/>
            <person name="Kong H."/>
            <person name="Krueger D.H."/>
            <person name="Lacks S."/>
            <person name="Marinus M.G."/>
            <person name="Miyahara M."/>
            <person name="Morgan R.D."/>
            <person name="Murray N.E."/>
            <person name="Nagaraja V."/>
            <person name="Piekarowicz A."/>
            <person name="Pingoud A."/>
            <person name="Raleigh E."/>
            <person name="Rao D.N."/>
            <person name="Reich N."/>
            <person name="Repin V.E."/>
            <person name="Selker E.U."/>
            <person name="Shaw P.C."/>
            <person name="Stein D.C."/>
            <person name="Stoddard B.L."/>
            <person name="Szybalski W."/>
            <person name="Trautner T.A."/>
            <person name="Van Etten J.L."/>
            <person name="Vitor J.M."/>
            <person name="Wilson G.G."/>
            <person name="Xu S.Y."/>
        </authorList>
    </citation>
    <scope>NOMENCLATURE</scope>
    <scope>SUBTYPE</scope>
</reference>
<accession>P44999</accession>
<sequence>MLYYVPRREKSYMNIKPHLFGLNRSNRDFSLRETWGKNQFNSSFPVSLCCYMSSKGILANYLSIENAEIKCSSIDIKDVFEIEPENENTFFAFETSHSIKLTALPDHTTCDLTDADFGSEIVIRPDSIVYLACSLAEILKESLANCMDIPNNVDHLDWSEPKQVIPLFPHILSTLNNLCSRADTIQTPFLLQPVWKTLGKSPRLADNCLDIFIWSDVAFVKFILEISNLNVNVLSINRQTRTAIWLYKMLVDIVKYGRFNHHKIIDLCSYNTKNDKAFASSGMITNVFMKSERLERPIIMKSEIKNIILGGGQELLSPERRFDAIIYNSSELFR</sequence>
<comment type="function">
    <text evidence="1">A P subtype restriction enzyme that recognizes the double-stranded sequence 5'-GRCGYC-3'; the cleavage site is unknown.</text>
</comment>
<comment type="catalytic activity">
    <reaction>
        <text>Endonucleolytic cleavage of DNA to give specific double-stranded fragments with terminal 5'-phosphates.</text>
        <dbReference type="EC" id="3.1.21.4"/>
    </reaction>
</comment>
<proteinExistence type="predicted"/>
<name>T2D5_HAEIN</name>
<feature type="chain" id="PRO_0000077322" description="Probable type II restriction enzyme HindVP">
    <location>
        <begin position="1"/>
        <end position="334"/>
    </location>
</feature>
<evidence type="ECO:0000303" key="1">
    <source>
    </source>
</evidence>
<protein>
    <recommendedName>
        <fullName evidence="1">Probable type II restriction enzyme HindVP</fullName>
        <shortName>R.HindVP</shortName>
        <ecNumber>3.1.21.4</ecNumber>
    </recommendedName>
    <alternativeName>
        <fullName>Endonuclease HindVP</fullName>
    </alternativeName>
    <alternativeName>
        <fullName>Probable type-2 restriction enzyme HindVP</fullName>
    </alternativeName>
</protein>
<keyword id="KW-0255">Endonuclease</keyword>
<keyword id="KW-0378">Hydrolase</keyword>
<keyword id="KW-0540">Nuclease</keyword>
<keyword id="KW-1185">Reference proteome</keyword>
<keyword id="KW-0680">Restriction system</keyword>
<gene>
    <name type="primary">hindVRP</name>
    <name type="ordered locus">HI_1040</name>
</gene>
<organism>
    <name type="scientific">Haemophilus influenzae (strain ATCC 51907 / DSM 11121 / KW20 / Rd)</name>
    <dbReference type="NCBI Taxonomy" id="71421"/>
    <lineage>
        <taxon>Bacteria</taxon>
        <taxon>Pseudomonadati</taxon>
        <taxon>Pseudomonadota</taxon>
        <taxon>Gammaproteobacteria</taxon>
        <taxon>Pasteurellales</taxon>
        <taxon>Pasteurellaceae</taxon>
        <taxon>Haemophilus</taxon>
    </lineage>
</organism>
<dbReference type="EC" id="3.1.21.4"/>
<dbReference type="EMBL" id="L42023">
    <property type="protein sequence ID" value="AAC22699.1"/>
    <property type="molecule type" value="Genomic_DNA"/>
</dbReference>
<dbReference type="PIR" id="B64109">
    <property type="entry name" value="B64109"/>
</dbReference>
<dbReference type="RefSeq" id="NP_439199.1">
    <property type="nucleotide sequence ID" value="NC_000907.1"/>
</dbReference>
<dbReference type="STRING" id="71421.HI_1040"/>
<dbReference type="REBASE" id="2819">
    <property type="entry name" value="HindVP"/>
</dbReference>
<dbReference type="EnsemblBacteria" id="AAC22699">
    <property type="protein sequence ID" value="AAC22699"/>
    <property type="gene ID" value="HI_1040"/>
</dbReference>
<dbReference type="KEGG" id="hin:HI_1040"/>
<dbReference type="PATRIC" id="fig|71421.8.peg.1084"/>
<dbReference type="eggNOG" id="ENOG502Z9NT">
    <property type="taxonomic scope" value="Bacteria"/>
</dbReference>
<dbReference type="HOGENOM" id="CLU_775334_0_0_6"/>
<dbReference type="OrthoDB" id="1100091at2"/>
<dbReference type="BioCyc" id="HINF71421:G1GJ1-1079-MONOMER"/>
<dbReference type="PRO" id="PR:P44999"/>
<dbReference type="Proteomes" id="UP000000579">
    <property type="component" value="Chromosome"/>
</dbReference>
<dbReference type="GO" id="GO:0003677">
    <property type="term" value="F:DNA binding"/>
    <property type="evidence" value="ECO:0007669"/>
    <property type="project" value="InterPro"/>
</dbReference>
<dbReference type="GO" id="GO:0009036">
    <property type="term" value="F:type II site-specific deoxyribonuclease activity"/>
    <property type="evidence" value="ECO:0007669"/>
    <property type="project" value="UniProtKB-EC"/>
</dbReference>
<dbReference type="GO" id="GO:0009307">
    <property type="term" value="P:DNA restriction-modification system"/>
    <property type="evidence" value="ECO:0007669"/>
    <property type="project" value="UniProtKB-KW"/>
</dbReference>
<dbReference type="InterPro" id="IPR019044">
    <property type="entry name" value="Restrct_endonuc_II_HindVP"/>
</dbReference>
<dbReference type="Pfam" id="PF09519">
    <property type="entry name" value="RE_HindVP"/>
    <property type="match status" value="2"/>
</dbReference>